<name>AROA_METC4</name>
<sequence>MSHDSEPQPVTATPGGPLNGSLKPPGDKSISHRAMILGLLAIGETQVEGLLEGDDVLRTAAAAKALGAQITREGEGRWRIVGVGIGGMQDPDGVLDFGNAGTGSRLMMGVVGGQPVTATFDGDASLRKRPMRRILDPILKMGAEIVSEAEGGRVPLTLRGPREAIPIRYELPVASAQIKSAVLLAGLNAPGTTTVIEKAASRDHTERMLHLFGAEVTVTPSGEGGHGRTVTLTGQPTLRGTDVVVPADPSSAAFPLVAALIVPGSEVILRGVMMNPLRTGLITTLIEMGADIERLDEREEGGETVADLRVRASRLKGVDVPAERAPSMIDEYPILAVAASFAEGTTRMNGLHELRVKESDRLAAVAAGLAANGVTHAIEGDDLIVTGNGQAPAGGGTVATHLDHRIAMAFLVLGLAAKSPVTVDDGAMIATSFPSFRPTMLALGARIEDGAAA</sequence>
<dbReference type="EC" id="2.5.1.19" evidence="1"/>
<dbReference type="EMBL" id="CP001298">
    <property type="protein sequence ID" value="ACK83248.1"/>
    <property type="molecule type" value="Genomic_DNA"/>
</dbReference>
<dbReference type="RefSeq" id="WP_015950858.1">
    <property type="nucleotide sequence ID" value="NC_011757.1"/>
</dbReference>
<dbReference type="SMR" id="B7KZL6"/>
<dbReference type="KEGG" id="mch:Mchl_2405"/>
<dbReference type="HOGENOM" id="CLU_024321_0_1_5"/>
<dbReference type="UniPathway" id="UPA00053">
    <property type="reaction ID" value="UER00089"/>
</dbReference>
<dbReference type="Proteomes" id="UP000002385">
    <property type="component" value="Chromosome"/>
</dbReference>
<dbReference type="GO" id="GO:0005737">
    <property type="term" value="C:cytoplasm"/>
    <property type="evidence" value="ECO:0007669"/>
    <property type="project" value="UniProtKB-SubCell"/>
</dbReference>
<dbReference type="GO" id="GO:0003866">
    <property type="term" value="F:3-phosphoshikimate 1-carboxyvinyltransferase activity"/>
    <property type="evidence" value="ECO:0007669"/>
    <property type="project" value="UniProtKB-UniRule"/>
</dbReference>
<dbReference type="GO" id="GO:0008652">
    <property type="term" value="P:amino acid biosynthetic process"/>
    <property type="evidence" value="ECO:0007669"/>
    <property type="project" value="UniProtKB-KW"/>
</dbReference>
<dbReference type="GO" id="GO:0009073">
    <property type="term" value="P:aromatic amino acid family biosynthetic process"/>
    <property type="evidence" value="ECO:0007669"/>
    <property type="project" value="UniProtKB-KW"/>
</dbReference>
<dbReference type="GO" id="GO:0009423">
    <property type="term" value="P:chorismate biosynthetic process"/>
    <property type="evidence" value="ECO:0007669"/>
    <property type="project" value="UniProtKB-UniRule"/>
</dbReference>
<dbReference type="CDD" id="cd01556">
    <property type="entry name" value="EPSP_synthase"/>
    <property type="match status" value="1"/>
</dbReference>
<dbReference type="FunFam" id="3.65.10.10:FF:000005">
    <property type="entry name" value="3-phosphoshikimate 1-carboxyvinyltransferase"/>
    <property type="match status" value="1"/>
</dbReference>
<dbReference type="Gene3D" id="3.65.10.10">
    <property type="entry name" value="Enolpyruvate transferase domain"/>
    <property type="match status" value="2"/>
</dbReference>
<dbReference type="HAMAP" id="MF_00210">
    <property type="entry name" value="EPSP_synth"/>
    <property type="match status" value="1"/>
</dbReference>
<dbReference type="InterPro" id="IPR001986">
    <property type="entry name" value="Enolpyruvate_Tfrase_dom"/>
</dbReference>
<dbReference type="InterPro" id="IPR036968">
    <property type="entry name" value="Enolpyruvate_Tfrase_sf"/>
</dbReference>
<dbReference type="InterPro" id="IPR006264">
    <property type="entry name" value="EPSP_synthase"/>
</dbReference>
<dbReference type="InterPro" id="IPR023193">
    <property type="entry name" value="EPSP_synthase_CS"/>
</dbReference>
<dbReference type="InterPro" id="IPR013792">
    <property type="entry name" value="RNA3'P_cycl/enolpyr_Trfase_a/b"/>
</dbReference>
<dbReference type="NCBIfam" id="TIGR01356">
    <property type="entry name" value="aroA"/>
    <property type="match status" value="1"/>
</dbReference>
<dbReference type="PANTHER" id="PTHR21090">
    <property type="entry name" value="AROM/DEHYDROQUINATE SYNTHASE"/>
    <property type="match status" value="1"/>
</dbReference>
<dbReference type="PANTHER" id="PTHR21090:SF5">
    <property type="entry name" value="PENTAFUNCTIONAL AROM POLYPEPTIDE"/>
    <property type="match status" value="1"/>
</dbReference>
<dbReference type="Pfam" id="PF00275">
    <property type="entry name" value="EPSP_synthase"/>
    <property type="match status" value="1"/>
</dbReference>
<dbReference type="PIRSF" id="PIRSF000505">
    <property type="entry name" value="EPSPS"/>
    <property type="match status" value="1"/>
</dbReference>
<dbReference type="SUPFAM" id="SSF55205">
    <property type="entry name" value="EPT/RTPC-like"/>
    <property type="match status" value="1"/>
</dbReference>
<dbReference type="PROSITE" id="PS00104">
    <property type="entry name" value="EPSP_SYNTHASE_1"/>
    <property type="match status" value="1"/>
</dbReference>
<dbReference type="PROSITE" id="PS00885">
    <property type="entry name" value="EPSP_SYNTHASE_2"/>
    <property type="match status" value="1"/>
</dbReference>
<accession>B7KZL6</accession>
<reference key="1">
    <citation type="submission" date="2008-12" db="EMBL/GenBank/DDBJ databases">
        <title>Complete sequence of chromosome of Methylobacterium chloromethanicum CM4.</title>
        <authorList>
            <consortium name="US DOE Joint Genome Institute"/>
            <person name="Lucas S."/>
            <person name="Copeland A."/>
            <person name="Lapidus A."/>
            <person name="Glavina del Rio T."/>
            <person name="Dalin E."/>
            <person name="Tice H."/>
            <person name="Bruce D."/>
            <person name="Goodwin L."/>
            <person name="Pitluck S."/>
            <person name="Chertkov O."/>
            <person name="Brettin T."/>
            <person name="Detter J.C."/>
            <person name="Han C."/>
            <person name="Larimer F."/>
            <person name="Land M."/>
            <person name="Hauser L."/>
            <person name="Kyrpides N."/>
            <person name="Mikhailova N."/>
            <person name="Marx C."/>
            <person name="Richardson P."/>
        </authorList>
    </citation>
    <scope>NUCLEOTIDE SEQUENCE [LARGE SCALE GENOMIC DNA]</scope>
    <source>
        <strain>CM4 / NCIMB 13688</strain>
    </source>
</reference>
<protein>
    <recommendedName>
        <fullName evidence="1">3-phosphoshikimate 1-carboxyvinyltransferase</fullName>
        <ecNumber evidence="1">2.5.1.19</ecNumber>
    </recommendedName>
    <alternativeName>
        <fullName evidence="1">5-enolpyruvylshikimate-3-phosphate synthase</fullName>
        <shortName evidence="1">EPSP synthase</shortName>
        <shortName evidence="1">EPSPS</shortName>
    </alternativeName>
</protein>
<gene>
    <name evidence="1" type="primary">aroA</name>
    <name type="ordered locus">Mchl_2405</name>
</gene>
<evidence type="ECO:0000255" key="1">
    <source>
        <dbReference type="HAMAP-Rule" id="MF_00210"/>
    </source>
</evidence>
<evidence type="ECO:0000256" key="2">
    <source>
        <dbReference type="SAM" id="MobiDB-lite"/>
    </source>
</evidence>
<keyword id="KW-0028">Amino-acid biosynthesis</keyword>
<keyword id="KW-0057">Aromatic amino acid biosynthesis</keyword>
<keyword id="KW-0963">Cytoplasm</keyword>
<keyword id="KW-0808">Transferase</keyword>
<feature type="chain" id="PRO_1000124692" description="3-phosphoshikimate 1-carboxyvinyltransferase">
    <location>
        <begin position="1"/>
        <end position="453"/>
    </location>
</feature>
<feature type="region of interest" description="Disordered" evidence="2">
    <location>
        <begin position="1"/>
        <end position="27"/>
    </location>
</feature>
<feature type="active site" description="Proton acceptor" evidence="1">
    <location>
        <position position="330"/>
    </location>
</feature>
<feature type="binding site" evidence="1">
    <location>
        <position position="28"/>
    </location>
    <ligand>
        <name>3-phosphoshikimate</name>
        <dbReference type="ChEBI" id="CHEBI:145989"/>
    </ligand>
</feature>
<feature type="binding site" evidence="1">
    <location>
        <position position="28"/>
    </location>
    <ligand>
        <name>phosphoenolpyruvate</name>
        <dbReference type="ChEBI" id="CHEBI:58702"/>
    </ligand>
</feature>
<feature type="binding site" evidence="1">
    <location>
        <position position="29"/>
    </location>
    <ligand>
        <name>3-phosphoshikimate</name>
        <dbReference type="ChEBI" id="CHEBI:145989"/>
    </ligand>
</feature>
<feature type="binding site" evidence="1">
    <location>
        <position position="33"/>
    </location>
    <ligand>
        <name>3-phosphoshikimate</name>
        <dbReference type="ChEBI" id="CHEBI:145989"/>
    </ligand>
</feature>
<feature type="binding site" evidence="1">
    <location>
        <position position="101"/>
    </location>
    <ligand>
        <name>phosphoenolpyruvate</name>
        <dbReference type="ChEBI" id="CHEBI:58702"/>
    </ligand>
</feature>
<feature type="binding site" evidence="1">
    <location>
        <position position="129"/>
    </location>
    <ligand>
        <name>phosphoenolpyruvate</name>
        <dbReference type="ChEBI" id="CHEBI:58702"/>
    </ligand>
</feature>
<feature type="binding site" evidence="1">
    <location>
        <position position="175"/>
    </location>
    <ligand>
        <name>3-phosphoshikimate</name>
        <dbReference type="ChEBI" id="CHEBI:145989"/>
    </ligand>
</feature>
<feature type="binding site" evidence="1">
    <location>
        <position position="177"/>
    </location>
    <ligand>
        <name>3-phosphoshikimate</name>
        <dbReference type="ChEBI" id="CHEBI:145989"/>
    </ligand>
</feature>
<feature type="binding site" evidence="1">
    <location>
        <position position="177"/>
    </location>
    <ligand>
        <name>phosphoenolpyruvate</name>
        <dbReference type="ChEBI" id="CHEBI:58702"/>
    </ligand>
</feature>
<feature type="binding site" evidence="1">
    <location>
        <position position="330"/>
    </location>
    <ligand>
        <name>3-phosphoshikimate</name>
        <dbReference type="ChEBI" id="CHEBI:145989"/>
    </ligand>
</feature>
<feature type="binding site" evidence="1">
    <location>
        <position position="357"/>
    </location>
    <ligand>
        <name>3-phosphoshikimate</name>
        <dbReference type="ChEBI" id="CHEBI:145989"/>
    </ligand>
</feature>
<feature type="binding site" evidence="1">
    <location>
        <position position="361"/>
    </location>
    <ligand>
        <name>phosphoenolpyruvate</name>
        <dbReference type="ChEBI" id="CHEBI:58702"/>
    </ligand>
</feature>
<feature type="binding site" evidence="1">
    <location>
        <position position="405"/>
    </location>
    <ligand>
        <name>phosphoenolpyruvate</name>
        <dbReference type="ChEBI" id="CHEBI:58702"/>
    </ligand>
</feature>
<organism>
    <name type="scientific">Methylorubrum extorquens (strain CM4 / NCIMB 13688)</name>
    <name type="common">Methylobacterium extorquens</name>
    <dbReference type="NCBI Taxonomy" id="440085"/>
    <lineage>
        <taxon>Bacteria</taxon>
        <taxon>Pseudomonadati</taxon>
        <taxon>Pseudomonadota</taxon>
        <taxon>Alphaproteobacteria</taxon>
        <taxon>Hyphomicrobiales</taxon>
        <taxon>Methylobacteriaceae</taxon>
        <taxon>Methylorubrum</taxon>
    </lineage>
</organism>
<proteinExistence type="inferred from homology"/>
<comment type="function">
    <text evidence="1">Catalyzes the transfer of the enolpyruvyl moiety of phosphoenolpyruvate (PEP) to the 5-hydroxyl of shikimate-3-phosphate (S3P) to produce enolpyruvyl shikimate-3-phosphate and inorganic phosphate.</text>
</comment>
<comment type="catalytic activity">
    <reaction evidence="1">
        <text>3-phosphoshikimate + phosphoenolpyruvate = 5-O-(1-carboxyvinyl)-3-phosphoshikimate + phosphate</text>
        <dbReference type="Rhea" id="RHEA:21256"/>
        <dbReference type="ChEBI" id="CHEBI:43474"/>
        <dbReference type="ChEBI" id="CHEBI:57701"/>
        <dbReference type="ChEBI" id="CHEBI:58702"/>
        <dbReference type="ChEBI" id="CHEBI:145989"/>
        <dbReference type="EC" id="2.5.1.19"/>
    </reaction>
    <physiologicalReaction direction="left-to-right" evidence="1">
        <dbReference type="Rhea" id="RHEA:21257"/>
    </physiologicalReaction>
</comment>
<comment type="pathway">
    <text evidence="1">Metabolic intermediate biosynthesis; chorismate biosynthesis; chorismate from D-erythrose 4-phosphate and phosphoenolpyruvate: step 6/7.</text>
</comment>
<comment type="subunit">
    <text evidence="1">Monomer.</text>
</comment>
<comment type="subcellular location">
    <subcellularLocation>
        <location evidence="1">Cytoplasm</location>
    </subcellularLocation>
</comment>
<comment type="similarity">
    <text evidence="1">Belongs to the EPSP synthase family.</text>
</comment>